<dbReference type="EC" id="1.1.1.-" evidence="1"/>
<dbReference type="EMBL" id="AC020622">
    <property type="protein sequence ID" value="AAF76476.1"/>
    <property type="molecule type" value="Genomic_DNA"/>
</dbReference>
<dbReference type="EMBL" id="CP002684">
    <property type="protein sequence ID" value="AEE27362.1"/>
    <property type="molecule type" value="Genomic_DNA"/>
</dbReference>
<dbReference type="EMBL" id="AK220962">
    <property type="protein sequence ID" value="BAD94511.1"/>
    <property type="molecule type" value="mRNA"/>
</dbReference>
<dbReference type="PIR" id="G86151">
    <property type="entry name" value="G86151"/>
</dbReference>
<dbReference type="RefSeq" id="NP_171700.1">
    <property type="nucleotide sequence ID" value="NM_100078.3"/>
</dbReference>
<dbReference type="SMR" id="Q9LPC3"/>
<dbReference type="FunCoup" id="Q9LPC3">
    <property type="interactions" value="1"/>
</dbReference>
<dbReference type="STRING" id="3702.Q9LPC3"/>
<dbReference type="GlyCosmos" id="Q9LPC3">
    <property type="glycosylation" value="7 sites, No reported glycans"/>
</dbReference>
<dbReference type="GlyGen" id="Q9LPC3">
    <property type="glycosylation" value="8 sites"/>
</dbReference>
<dbReference type="iPTMnet" id="Q9LPC3"/>
<dbReference type="PaxDb" id="3702-AT1G01980.1"/>
<dbReference type="ProteomicsDB" id="241126"/>
<dbReference type="EnsemblPlants" id="AT1G01980.1">
    <property type="protein sequence ID" value="AT1G01980.1"/>
    <property type="gene ID" value="AT1G01980"/>
</dbReference>
<dbReference type="GeneID" id="839296"/>
<dbReference type="Gramene" id="AT1G01980.1">
    <property type="protein sequence ID" value="AT1G01980.1"/>
    <property type="gene ID" value="AT1G01980"/>
</dbReference>
<dbReference type="KEGG" id="ath:AT1G01980"/>
<dbReference type="Araport" id="AT1G01980"/>
<dbReference type="TAIR" id="AT1G01980">
    <property type="gene designation" value="ATBBE1"/>
</dbReference>
<dbReference type="eggNOG" id="ENOG502QVGN">
    <property type="taxonomic scope" value="Eukaryota"/>
</dbReference>
<dbReference type="HOGENOM" id="CLU_018354_6_0_1"/>
<dbReference type="InParanoid" id="Q9LPC3"/>
<dbReference type="OMA" id="KCAVEYD"/>
<dbReference type="PhylomeDB" id="Q9LPC3"/>
<dbReference type="BioCyc" id="ARA:AT1G01980-MONOMER"/>
<dbReference type="PRO" id="PR:Q9LPC3"/>
<dbReference type="Proteomes" id="UP000006548">
    <property type="component" value="Chromosome 1"/>
</dbReference>
<dbReference type="ExpressionAtlas" id="Q9LPC3">
    <property type="expression patterns" value="baseline and differential"/>
</dbReference>
<dbReference type="GO" id="GO:0005576">
    <property type="term" value="C:extracellular region"/>
    <property type="evidence" value="ECO:0007669"/>
    <property type="project" value="UniProtKB-KW"/>
</dbReference>
<dbReference type="GO" id="GO:0005794">
    <property type="term" value="C:Golgi apparatus"/>
    <property type="evidence" value="ECO:0007005"/>
    <property type="project" value="TAIR"/>
</dbReference>
<dbReference type="GO" id="GO:0009505">
    <property type="term" value="C:plant-type cell wall"/>
    <property type="evidence" value="ECO:0000314"/>
    <property type="project" value="UniProtKB"/>
</dbReference>
<dbReference type="GO" id="GO:0005886">
    <property type="term" value="C:plasma membrane"/>
    <property type="evidence" value="ECO:0007005"/>
    <property type="project" value="TAIR"/>
</dbReference>
<dbReference type="GO" id="GO:0071949">
    <property type="term" value="F:FAD binding"/>
    <property type="evidence" value="ECO:0007669"/>
    <property type="project" value="InterPro"/>
</dbReference>
<dbReference type="GO" id="GO:0016899">
    <property type="term" value="F:oxidoreductase activity, acting on the CH-OH group of donors, oxygen as acceptor"/>
    <property type="evidence" value="ECO:0000314"/>
    <property type="project" value="TAIR"/>
</dbReference>
<dbReference type="FunFam" id="3.30.43.10:FF:000004">
    <property type="entry name" value="Berberine bridge enzyme-like 15"/>
    <property type="match status" value="1"/>
</dbReference>
<dbReference type="Gene3D" id="3.30.465.10">
    <property type="match status" value="1"/>
</dbReference>
<dbReference type="Gene3D" id="3.40.462.20">
    <property type="match status" value="1"/>
</dbReference>
<dbReference type="Gene3D" id="3.30.43.10">
    <property type="entry name" value="Uridine Diphospho-n-acetylenolpyruvylglucosamine Reductase, domain 2"/>
    <property type="match status" value="1"/>
</dbReference>
<dbReference type="InterPro" id="IPR012951">
    <property type="entry name" value="BBE"/>
</dbReference>
<dbReference type="InterPro" id="IPR016166">
    <property type="entry name" value="FAD-bd_PCMH"/>
</dbReference>
<dbReference type="InterPro" id="IPR036318">
    <property type="entry name" value="FAD-bd_PCMH-like_sf"/>
</dbReference>
<dbReference type="InterPro" id="IPR016167">
    <property type="entry name" value="FAD-bd_PCMH_sub1"/>
</dbReference>
<dbReference type="InterPro" id="IPR016169">
    <property type="entry name" value="FAD-bd_PCMH_sub2"/>
</dbReference>
<dbReference type="InterPro" id="IPR006094">
    <property type="entry name" value="Oxid_FAD_bind_N"/>
</dbReference>
<dbReference type="PANTHER" id="PTHR32448">
    <property type="entry name" value="OS08G0158400 PROTEIN"/>
    <property type="match status" value="1"/>
</dbReference>
<dbReference type="Pfam" id="PF08031">
    <property type="entry name" value="BBE"/>
    <property type="match status" value="1"/>
</dbReference>
<dbReference type="Pfam" id="PF01565">
    <property type="entry name" value="FAD_binding_4"/>
    <property type="match status" value="1"/>
</dbReference>
<dbReference type="SUPFAM" id="SSF56176">
    <property type="entry name" value="FAD-binding/transporter-associated domain-like"/>
    <property type="match status" value="1"/>
</dbReference>
<dbReference type="PROSITE" id="PS51387">
    <property type="entry name" value="FAD_PCMH"/>
    <property type="match status" value="1"/>
</dbReference>
<organism>
    <name type="scientific">Arabidopsis thaliana</name>
    <name type="common">Mouse-ear cress</name>
    <dbReference type="NCBI Taxonomy" id="3702"/>
    <lineage>
        <taxon>Eukaryota</taxon>
        <taxon>Viridiplantae</taxon>
        <taxon>Streptophyta</taxon>
        <taxon>Embryophyta</taxon>
        <taxon>Tracheophyta</taxon>
        <taxon>Spermatophyta</taxon>
        <taxon>Magnoliopsida</taxon>
        <taxon>eudicotyledons</taxon>
        <taxon>Gunneridae</taxon>
        <taxon>Pentapetalae</taxon>
        <taxon>rosids</taxon>
        <taxon>malvids</taxon>
        <taxon>Brassicales</taxon>
        <taxon>Brassicaceae</taxon>
        <taxon>Camelineae</taxon>
        <taxon>Arabidopsis</taxon>
    </lineage>
</organism>
<comment type="cofactor">
    <cofactor evidence="1">
        <name>FAD</name>
        <dbReference type="ChEBI" id="CHEBI:57692"/>
    </cofactor>
    <text evidence="1">Binds 1 FAD per subunit in a bicovalent manner.</text>
</comment>
<comment type="subcellular location">
    <subcellularLocation>
        <location evidence="5">Secreted</location>
        <location evidence="5">Cell wall</location>
    </subcellularLocation>
</comment>
<comment type="tissue specificity">
    <text evidence="5">Accumulates in cell walls of etiolated hypocotyls.</text>
</comment>
<comment type="PTM">
    <text evidence="1">The FAD cofactor is bound via a bicovalent 6-S-cysteinyl, 8alpha-N1-histidyl FAD linkage.</text>
</comment>
<comment type="similarity">
    <text evidence="7">Belongs to the oxygen-dependent FAD-linked oxidoreductase family.</text>
</comment>
<protein>
    <recommendedName>
        <fullName evidence="6">Berberine bridge enzyme-like 1</fullName>
        <shortName evidence="6">AtBBE-like 1</shortName>
        <ecNumber evidence="1">1.1.1.-</ecNumber>
    </recommendedName>
    <alternativeName>
        <fullName evidence="7">Protein SIMILAR TO ELECTRON CAREER 1A</fullName>
        <shortName evidence="7">AtSEC1A</shortName>
    </alternativeName>
</protein>
<sequence length="541" mass="60103">MKLSCLVFLIVSSLVSSSLATAPPNTSIYESFLQCFSNQTGAPPEKLCDVVLPQSSASFTPTLRAYIRNARFNTSTSPKPLLVIAARSECHVQATVLCTKSLNFQLKTRSGGHDYDGVSYISNRPFFVLDMSYLRNITVDMSDDGGSAWVGAGATLGEVYYNIWQSSKTHGTHGFPAGVCPTVGAGGHISGGGYGNMIRKYGLSVDYVTDAKIVDVNGRILDRKSMGEDLFWAIGGGGGASFGVILSFKIKLVPVPPRVTVFRVEKTLVENALDMVHKWQFVAPKTSPDLFMRLMLQPVTRNTTQTVRASVVALFLGKQSDLMSLLTKEFPELGLKPENCTEMTWIQSVMWWANNDNATVIKPEILLDRNPDSASFLKRKSDYVEKEISKDGLDFLCKKLMEAGKLGLVFNPYGGKMSEVATTATPFPHRKRLFKVQHSMNWKDPGTDVESSFMEKTRSFYSYMAPFVTKNPRHTYLNYRDLDIGINSHGPNSYREAEVYGRKYFGENFDRLVKVKTAVDPENFFRDEQSIPTLPTKPSSS</sequence>
<reference key="1">
    <citation type="journal article" date="2000" name="Nature">
        <title>Sequence and analysis of chromosome 1 of the plant Arabidopsis thaliana.</title>
        <authorList>
            <person name="Theologis A."/>
            <person name="Ecker J.R."/>
            <person name="Palm C.J."/>
            <person name="Federspiel N.A."/>
            <person name="Kaul S."/>
            <person name="White O."/>
            <person name="Alonso J."/>
            <person name="Altafi H."/>
            <person name="Araujo R."/>
            <person name="Bowman C.L."/>
            <person name="Brooks S.Y."/>
            <person name="Buehler E."/>
            <person name="Chan A."/>
            <person name="Chao Q."/>
            <person name="Chen H."/>
            <person name="Cheuk R.F."/>
            <person name="Chin C.W."/>
            <person name="Chung M.K."/>
            <person name="Conn L."/>
            <person name="Conway A.B."/>
            <person name="Conway A.R."/>
            <person name="Creasy T.H."/>
            <person name="Dewar K."/>
            <person name="Dunn P."/>
            <person name="Etgu P."/>
            <person name="Feldblyum T.V."/>
            <person name="Feng J.-D."/>
            <person name="Fong B."/>
            <person name="Fujii C.Y."/>
            <person name="Gill J.E."/>
            <person name="Goldsmith A.D."/>
            <person name="Haas B."/>
            <person name="Hansen N.F."/>
            <person name="Hughes B."/>
            <person name="Huizar L."/>
            <person name="Hunter J.L."/>
            <person name="Jenkins J."/>
            <person name="Johnson-Hopson C."/>
            <person name="Khan S."/>
            <person name="Khaykin E."/>
            <person name="Kim C.J."/>
            <person name="Koo H.L."/>
            <person name="Kremenetskaia I."/>
            <person name="Kurtz D.B."/>
            <person name="Kwan A."/>
            <person name="Lam B."/>
            <person name="Langin-Hooper S."/>
            <person name="Lee A."/>
            <person name="Lee J.M."/>
            <person name="Lenz C.A."/>
            <person name="Li J.H."/>
            <person name="Li Y.-P."/>
            <person name="Lin X."/>
            <person name="Liu S.X."/>
            <person name="Liu Z.A."/>
            <person name="Luros J.S."/>
            <person name="Maiti R."/>
            <person name="Marziali A."/>
            <person name="Militscher J."/>
            <person name="Miranda M."/>
            <person name="Nguyen M."/>
            <person name="Nierman W.C."/>
            <person name="Osborne B.I."/>
            <person name="Pai G."/>
            <person name="Peterson J."/>
            <person name="Pham P.K."/>
            <person name="Rizzo M."/>
            <person name="Rooney T."/>
            <person name="Rowley D."/>
            <person name="Sakano H."/>
            <person name="Salzberg S.L."/>
            <person name="Schwartz J.R."/>
            <person name="Shinn P."/>
            <person name="Southwick A.M."/>
            <person name="Sun H."/>
            <person name="Tallon L.J."/>
            <person name="Tambunga G."/>
            <person name="Toriumi M.J."/>
            <person name="Town C.D."/>
            <person name="Utterback T."/>
            <person name="Van Aken S."/>
            <person name="Vaysberg M."/>
            <person name="Vysotskaia V.S."/>
            <person name="Walker M."/>
            <person name="Wu D."/>
            <person name="Yu G."/>
            <person name="Fraser C.M."/>
            <person name="Venter J.C."/>
            <person name="Davis R.W."/>
        </authorList>
    </citation>
    <scope>NUCLEOTIDE SEQUENCE [LARGE SCALE GENOMIC DNA]</scope>
    <source>
        <strain>cv. Columbia</strain>
    </source>
</reference>
<reference key="2">
    <citation type="journal article" date="2017" name="Plant J.">
        <title>Araport11: a complete reannotation of the Arabidopsis thaliana reference genome.</title>
        <authorList>
            <person name="Cheng C.Y."/>
            <person name="Krishnakumar V."/>
            <person name="Chan A.P."/>
            <person name="Thibaud-Nissen F."/>
            <person name="Schobel S."/>
            <person name="Town C.D."/>
        </authorList>
    </citation>
    <scope>GENOME REANNOTATION</scope>
    <source>
        <strain>cv. Columbia</strain>
    </source>
</reference>
<reference key="3">
    <citation type="submission" date="2005-03" db="EMBL/GenBank/DDBJ databases">
        <title>Large-scale analysis of RIKEN Arabidopsis full-length (RAFL) cDNAs.</title>
        <authorList>
            <person name="Totoki Y."/>
            <person name="Seki M."/>
            <person name="Ishida J."/>
            <person name="Nakajima M."/>
            <person name="Enju A."/>
            <person name="Kamiya A."/>
            <person name="Narusaka M."/>
            <person name="Shin-i T."/>
            <person name="Nakagawa M."/>
            <person name="Sakamoto N."/>
            <person name="Oishi K."/>
            <person name="Kohara Y."/>
            <person name="Kobayashi M."/>
            <person name="Toyoda A."/>
            <person name="Sakaki Y."/>
            <person name="Sakurai T."/>
            <person name="Iida K."/>
            <person name="Akiyama K."/>
            <person name="Satou M."/>
            <person name="Toyoda T."/>
            <person name="Konagaya A."/>
            <person name="Carninci P."/>
            <person name="Kawai J."/>
            <person name="Hayashizaki Y."/>
            <person name="Shinozaki K."/>
        </authorList>
    </citation>
    <scope>NUCLEOTIDE SEQUENCE [LARGE SCALE MRNA] OF 10-541</scope>
    <source>
        <strain>cv. Columbia</strain>
    </source>
</reference>
<reference key="4">
    <citation type="journal article" date="2008" name="BMC Plant Biol.">
        <title>A new picture of cell wall protein dynamics in elongating cells of Arabidopsis thaliana: confirmed actors and newcomers.</title>
        <authorList>
            <person name="Irshad M."/>
            <person name="Canut H."/>
            <person name="Borderies G."/>
            <person name="Pont-Lezica R."/>
            <person name="Jamet E."/>
        </authorList>
    </citation>
    <scope>SUBCELLULAR LOCATION</scope>
    <scope>TISSUE SPECIFICITY</scope>
</reference>
<reference key="5">
    <citation type="journal article" date="2015" name="J. Biol. Chem.">
        <title>Oxidation of monolignols by members of the berberine bridge enzyme family suggests a role in plant cell wall metabolism.</title>
        <authorList>
            <person name="Daniel B."/>
            <person name="Pavkov-Keller T."/>
            <person name="Steiner B."/>
            <person name="Dordic A."/>
            <person name="Gutmann A."/>
            <person name="Nidetzky B."/>
            <person name="Sensen C.W."/>
            <person name="van der Graaff E."/>
            <person name="Wallner S."/>
            <person name="Gruber K."/>
            <person name="Macheroux P."/>
        </authorList>
    </citation>
    <scope>GENE FAMILY</scope>
    <scope>NOMENCLATURE</scope>
</reference>
<keyword id="KW-0134">Cell wall</keyword>
<keyword id="KW-1015">Disulfide bond</keyword>
<keyword id="KW-0274">FAD</keyword>
<keyword id="KW-0285">Flavoprotein</keyword>
<keyword id="KW-0325">Glycoprotein</keyword>
<keyword id="KW-0547">Nucleotide-binding</keyword>
<keyword id="KW-0560">Oxidoreductase</keyword>
<keyword id="KW-1185">Reference proteome</keyword>
<keyword id="KW-0964">Secreted</keyword>
<keyword id="KW-0732">Signal</keyword>
<proteinExistence type="evidence at transcript level"/>
<name>BBE1_ARATH</name>
<evidence type="ECO:0000250" key="1">
    <source>
        <dbReference type="UniProtKB" id="O64743"/>
    </source>
</evidence>
<evidence type="ECO:0000255" key="2"/>
<evidence type="ECO:0000255" key="3">
    <source>
        <dbReference type="PROSITE-ProRule" id="PRU00498"/>
    </source>
</evidence>
<evidence type="ECO:0000255" key="4">
    <source>
        <dbReference type="PROSITE-ProRule" id="PRU00718"/>
    </source>
</evidence>
<evidence type="ECO:0000269" key="5">
    <source>
    </source>
</evidence>
<evidence type="ECO:0000303" key="6">
    <source>
    </source>
</evidence>
<evidence type="ECO:0000305" key="7"/>
<evidence type="ECO:0000312" key="8">
    <source>
        <dbReference type="Araport" id="AT1G01980"/>
    </source>
</evidence>
<evidence type="ECO:0000312" key="9">
    <source>
        <dbReference type="EMBL" id="AAF76476.1"/>
    </source>
</evidence>
<accession>Q9LPC3</accession>
<accession>Q56ZK2</accession>
<feature type="signal peptide" evidence="2">
    <location>
        <begin position="1"/>
        <end position="20"/>
    </location>
</feature>
<feature type="chain" id="PRO_5008180149" description="Berberine bridge enzyme-like 1">
    <location>
        <begin position="21"/>
        <end position="541"/>
    </location>
</feature>
<feature type="domain" description="FAD-binding PCMH-type" evidence="4">
    <location>
        <begin position="76"/>
        <end position="255"/>
    </location>
</feature>
<feature type="glycosylation site" description="N-linked (GlcNAc...) asparagine" evidence="3">
    <location>
        <position position="25"/>
    </location>
</feature>
<feature type="glycosylation site" description="N-linked (GlcNAc...) asparagine" evidence="3">
    <location>
        <position position="38"/>
    </location>
</feature>
<feature type="glycosylation site" description="N-linked (GlcNAc...) asparagine" evidence="3">
    <location>
        <position position="73"/>
    </location>
</feature>
<feature type="glycosylation site" description="N-linked (GlcNAc...) asparagine" evidence="3">
    <location>
        <position position="136"/>
    </location>
</feature>
<feature type="glycosylation site" description="N-linked (GlcNAc...) asparagine" evidence="3">
    <location>
        <position position="302"/>
    </location>
</feature>
<feature type="glycosylation site" description="N-linked (GlcNAc...) asparagine" evidence="3">
    <location>
        <position position="339"/>
    </location>
</feature>
<feature type="glycosylation site" description="N-linked (GlcNAc...) asparagine" evidence="3">
    <location>
        <position position="357"/>
    </location>
</feature>
<feature type="disulfide bond" evidence="1">
    <location>
        <begin position="35"/>
        <end position="98"/>
    </location>
</feature>
<feature type="cross-link" description="6-(S-cysteinyl)-8alpha-(pros-histidyl)-FAD (His-Cys)" evidence="1">
    <location>
        <begin position="113"/>
        <end position="180"/>
    </location>
</feature>
<gene>
    <name evidence="7" type="primary">SEC1A</name>
    <name evidence="8" type="ordered locus">At1g01980</name>
    <name evidence="9" type="ORF">F22M8.11</name>
</gene>